<accession>A1AZ46</accession>
<reference key="1">
    <citation type="submission" date="2006-12" db="EMBL/GenBank/DDBJ databases">
        <title>Complete sequence of chromosome 1 of Paracoccus denitrificans PD1222.</title>
        <authorList>
            <person name="Copeland A."/>
            <person name="Lucas S."/>
            <person name="Lapidus A."/>
            <person name="Barry K."/>
            <person name="Detter J.C."/>
            <person name="Glavina del Rio T."/>
            <person name="Hammon N."/>
            <person name="Israni S."/>
            <person name="Dalin E."/>
            <person name="Tice H."/>
            <person name="Pitluck S."/>
            <person name="Munk A.C."/>
            <person name="Brettin T."/>
            <person name="Bruce D."/>
            <person name="Han C."/>
            <person name="Tapia R."/>
            <person name="Gilna P."/>
            <person name="Schmutz J."/>
            <person name="Larimer F."/>
            <person name="Land M."/>
            <person name="Hauser L."/>
            <person name="Kyrpides N."/>
            <person name="Lykidis A."/>
            <person name="Spiro S."/>
            <person name="Richardson D.J."/>
            <person name="Moir J.W.B."/>
            <person name="Ferguson S.J."/>
            <person name="van Spanning R.J.M."/>
            <person name="Richardson P."/>
        </authorList>
    </citation>
    <scope>NUCLEOTIDE SEQUENCE [LARGE SCALE GENOMIC DNA]</scope>
    <source>
        <strain>Pd 1222</strain>
    </source>
</reference>
<sequence length="156" mass="17458">MEKIPMTRAGYDQLDEELRELRSVQRPAVIRAIAEAREHGDLSENAEYHAAREKQSFVEGRIKELEMILSRAEVIDPTRLNGSIKFGATVTLVDEDSEEERTYQIVGEAEADLERGLLNIRSPLARALIGKDEGDSIEVVTPGGGKSYEIISIRYV</sequence>
<dbReference type="EMBL" id="CP000489">
    <property type="protein sequence ID" value="ABL68540.1"/>
    <property type="molecule type" value="Genomic_DNA"/>
</dbReference>
<dbReference type="RefSeq" id="WP_011746773.1">
    <property type="nucleotide sequence ID" value="NC_008686.1"/>
</dbReference>
<dbReference type="SMR" id="A1AZ46"/>
<dbReference type="STRING" id="318586.Pden_0426"/>
<dbReference type="EnsemblBacteria" id="ABL68540">
    <property type="protein sequence ID" value="ABL68540"/>
    <property type="gene ID" value="Pden_0426"/>
</dbReference>
<dbReference type="GeneID" id="93451650"/>
<dbReference type="KEGG" id="pde:Pden_0426"/>
<dbReference type="eggNOG" id="COG0782">
    <property type="taxonomic scope" value="Bacteria"/>
</dbReference>
<dbReference type="HOGENOM" id="CLU_101379_2_0_5"/>
<dbReference type="OrthoDB" id="9808774at2"/>
<dbReference type="Proteomes" id="UP000000361">
    <property type="component" value="Chromosome 1"/>
</dbReference>
<dbReference type="GO" id="GO:0003677">
    <property type="term" value="F:DNA binding"/>
    <property type="evidence" value="ECO:0007669"/>
    <property type="project" value="UniProtKB-UniRule"/>
</dbReference>
<dbReference type="GO" id="GO:0070063">
    <property type="term" value="F:RNA polymerase binding"/>
    <property type="evidence" value="ECO:0007669"/>
    <property type="project" value="InterPro"/>
</dbReference>
<dbReference type="GO" id="GO:0006354">
    <property type="term" value="P:DNA-templated transcription elongation"/>
    <property type="evidence" value="ECO:0007669"/>
    <property type="project" value="TreeGrafter"/>
</dbReference>
<dbReference type="GO" id="GO:0032784">
    <property type="term" value="P:regulation of DNA-templated transcription elongation"/>
    <property type="evidence" value="ECO:0007669"/>
    <property type="project" value="UniProtKB-UniRule"/>
</dbReference>
<dbReference type="FunFam" id="1.10.287.180:FF:000001">
    <property type="entry name" value="Transcription elongation factor GreA"/>
    <property type="match status" value="1"/>
</dbReference>
<dbReference type="FunFam" id="3.10.50.30:FF:000001">
    <property type="entry name" value="Transcription elongation factor GreA"/>
    <property type="match status" value="1"/>
</dbReference>
<dbReference type="Gene3D" id="3.10.50.30">
    <property type="entry name" value="Transcription elongation factor, GreA/GreB, C-terminal domain"/>
    <property type="match status" value="1"/>
</dbReference>
<dbReference type="Gene3D" id="1.10.287.180">
    <property type="entry name" value="Transcription elongation factor, GreA/GreB, N-terminal domain"/>
    <property type="match status" value="1"/>
</dbReference>
<dbReference type="HAMAP" id="MF_00105">
    <property type="entry name" value="GreA_GreB"/>
    <property type="match status" value="1"/>
</dbReference>
<dbReference type="InterPro" id="IPR036953">
    <property type="entry name" value="GreA/GreB_C_sf"/>
</dbReference>
<dbReference type="InterPro" id="IPR018151">
    <property type="entry name" value="TF_GreA/GreB_CS"/>
</dbReference>
<dbReference type="InterPro" id="IPR006359">
    <property type="entry name" value="Tscrpt_elong_fac_GreA"/>
</dbReference>
<dbReference type="InterPro" id="IPR028624">
    <property type="entry name" value="Tscrpt_elong_fac_GreA/B"/>
</dbReference>
<dbReference type="InterPro" id="IPR001437">
    <property type="entry name" value="Tscrpt_elong_fac_GreA/B_C"/>
</dbReference>
<dbReference type="InterPro" id="IPR023459">
    <property type="entry name" value="Tscrpt_elong_fac_GreA/B_fam"/>
</dbReference>
<dbReference type="InterPro" id="IPR022691">
    <property type="entry name" value="Tscrpt_elong_fac_GreA/B_N"/>
</dbReference>
<dbReference type="InterPro" id="IPR036805">
    <property type="entry name" value="Tscrpt_elong_fac_GreA/B_N_sf"/>
</dbReference>
<dbReference type="NCBIfam" id="TIGR01462">
    <property type="entry name" value="greA"/>
    <property type="match status" value="1"/>
</dbReference>
<dbReference type="NCBIfam" id="NF001261">
    <property type="entry name" value="PRK00226.1-2"/>
    <property type="match status" value="1"/>
</dbReference>
<dbReference type="NCBIfam" id="NF001263">
    <property type="entry name" value="PRK00226.1-4"/>
    <property type="match status" value="1"/>
</dbReference>
<dbReference type="NCBIfam" id="NF001264">
    <property type="entry name" value="PRK00226.1-5"/>
    <property type="match status" value="1"/>
</dbReference>
<dbReference type="PANTHER" id="PTHR30437">
    <property type="entry name" value="TRANSCRIPTION ELONGATION FACTOR GREA"/>
    <property type="match status" value="1"/>
</dbReference>
<dbReference type="PANTHER" id="PTHR30437:SF4">
    <property type="entry name" value="TRANSCRIPTION ELONGATION FACTOR GREA"/>
    <property type="match status" value="1"/>
</dbReference>
<dbReference type="Pfam" id="PF01272">
    <property type="entry name" value="GreA_GreB"/>
    <property type="match status" value="1"/>
</dbReference>
<dbReference type="Pfam" id="PF03449">
    <property type="entry name" value="GreA_GreB_N"/>
    <property type="match status" value="1"/>
</dbReference>
<dbReference type="PIRSF" id="PIRSF006092">
    <property type="entry name" value="GreA_GreB"/>
    <property type="match status" value="1"/>
</dbReference>
<dbReference type="SUPFAM" id="SSF54534">
    <property type="entry name" value="FKBP-like"/>
    <property type="match status" value="1"/>
</dbReference>
<dbReference type="SUPFAM" id="SSF46557">
    <property type="entry name" value="GreA transcript cleavage protein, N-terminal domain"/>
    <property type="match status" value="1"/>
</dbReference>
<dbReference type="PROSITE" id="PS00829">
    <property type="entry name" value="GREAB_1"/>
    <property type="match status" value="1"/>
</dbReference>
<proteinExistence type="inferred from homology"/>
<keyword id="KW-0175">Coiled coil</keyword>
<keyword id="KW-0238">DNA-binding</keyword>
<keyword id="KW-1185">Reference proteome</keyword>
<keyword id="KW-0804">Transcription</keyword>
<keyword id="KW-0805">Transcription regulation</keyword>
<evidence type="ECO:0000255" key="1">
    <source>
        <dbReference type="HAMAP-Rule" id="MF_00105"/>
    </source>
</evidence>
<gene>
    <name evidence="1" type="primary">greA</name>
    <name type="ordered locus">Pden_0426</name>
</gene>
<protein>
    <recommendedName>
        <fullName evidence="1">Transcription elongation factor GreA</fullName>
    </recommendedName>
    <alternativeName>
        <fullName evidence="1">Transcript cleavage factor GreA</fullName>
    </alternativeName>
</protein>
<organism>
    <name type="scientific">Paracoccus denitrificans (strain Pd 1222)</name>
    <dbReference type="NCBI Taxonomy" id="318586"/>
    <lineage>
        <taxon>Bacteria</taxon>
        <taxon>Pseudomonadati</taxon>
        <taxon>Pseudomonadota</taxon>
        <taxon>Alphaproteobacteria</taxon>
        <taxon>Rhodobacterales</taxon>
        <taxon>Paracoccaceae</taxon>
        <taxon>Paracoccus</taxon>
    </lineage>
</organism>
<comment type="function">
    <text evidence="1">Necessary for efficient RNA polymerase transcription elongation past template-encoded arresting sites. The arresting sites in DNA have the property of trapping a certain fraction of elongating RNA polymerases that pass through, resulting in locked ternary complexes. Cleavage of the nascent transcript by cleavage factors such as GreA or GreB allows the resumption of elongation from the new 3'terminus. GreA releases sequences of 2 to 3 nucleotides.</text>
</comment>
<comment type="similarity">
    <text evidence="1">Belongs to the GreA/GreB family.</text>
</comment>
<name>GREA_PARDP</name>
<feature type="chain" id="PRO_1000034288" description="Transcription elongation factor GreA">
    <location>
        <begin position="1"/>
        <end position="156"/>
    </location>
</feature>
<feature type="coiled-coil region" evidence="1">
    <location>
        <begin position="46"/>
        <end position="66"/>
    </location>
</feature>